<organism>
    <name type="scientific">Aeromonas hydrophila subsp. hydrophila (strain ATCC 7966 / DSM 30187 / BCRC 13018 / CCUG 14551 / JCM 1027 / KCTC 2358 / NCIMB 9240 / NCTC 8049)</name>
    <dbReference type="NCBI Taxonomy" id="380703"/>
    <lineage>
        <taxon>Bacteria</taxon>
        <taxon>Pseudomonadati</taxon>
        <taxon>Pseudomonadota</taxon>
        <taxon>Gammaproteobacteria</taxon>
        <taxon>Aeromonadales</taxon>
        <taxon>Aeromonadaceae</taxon>
        <taxon>Aeromonas</taxon>
    </lineage>
</organism>
<proteinExistence type="inferred from homology"/>
<gene>
    <name evidence="1" type="primary">rplS</name>
    <name type="ordered locus">AHA_0669</name>
</gene>
<feature type="chain" id="PRO_1000049629" description="Large ribosomal subunit protein bL19">
    <location>
        <begin position="1"/>
        <end position="115"/>
    </location>
</feature>
<protein>
    <recommendedName>
        <fullName evidence="1">Large ribosomal subunit protein bL19</fullName>
    </recommendedName>
    <alternativeName>
        <fullName evidence="2">50S ribosomal protein L19</fullName>
    </alternativeName>
</protein>
<evidence type="ECO:0000255" key="1">
    <source>
        <dbReference type="HAMAP-Rule" id="MF_00402"/>
    </source>
</evidence>
<evidence type="ECO:0000305" key="2"/>
<accession>A0KG26</accession>
<keyword id="KW-1185">Reference proteome</keyword>
<keyword id="KW-0687">Ribonucleoprotein</keyword>
<keyword id="KW-0689">Ribosomal protein</keyword>
<reference key="1">
    <citation type="journal article" date="2006" name="J. Bacteriol.">
        <title>Genome sequence of Aeromonas hydrophila ATCC 7966T: jack of all trades.</title>
        <authorList>
            <person name="Seshadri R."/>
            <person name="Joseph S.W."/>
            <person name="Chopra A.K."/>
            <person name="Sha J."/>
            <person name="Shaw J."/>
            <person name="Graf J."/>
            <person name="Haft D.H."/>
            <person name="Wu M."/>
            <person name="Ren Q."/>
            <person name="Rosovitz M.J."/>
            <person name="Madupu R."/>
            <person name="Tallon L."/>
            <person name="Kim M."/>
            <person name="Jin S."/>
            <person name="Vuong H."/>
            <person name="Stine O.C."/>
            <person name="Ali A."/>
            <person name="Horneman A.J."/>
            <person name="Heidelberg J.F."/>
        </authorList>
    </citation>
    <scope>NUCLEOTIDE SEQUENCE [LARGE SCALE GENOMIC DNA]</scope>
    <source>
        <strain>ATCC 7966 / DSM 30187 / BCRC 13018 / CCUG 14551 / JCM 1027 / KCTC 2358 / NCIMB 9240 / NCTC 8049</strain>
    </source>
</reference>
<sequence>MSKIIQQLEQEQLRTDIPAFAQGDTVRVQVRVKEGGKERLQAFEGIVIAKRNRGLHSAFTVRKISNGEGVERVFQTHSPLIHSVELKRRGDVRRAKLYYLRNLSGKAARIKEKLN</sequence>
<comment type="function">
    <text evidence="1">This protein is located at the 30S-50S ribosomal subunit interface and may play a role in the structure and function of the aminoacyl-tRNA binding site.</text>
</comment>
<comment type="similarity">
    <text evidence="1">Belongs to the bacterial ribosomal protein bL19 family.</text>
</comment>
<name>RL19_AERHH</name>
<dbReference type="EMBL" id="CP000462">
    <property type="protein sequence ID" value="ABK38082.1"/>
    <property type="molecule type" value="Genomic_DNA"/>
</dbReference>
<dbReference type="RefSeq" id="WP_005313505.1">
    <property type="nucleotide sequence ID" value="NC_008570.1"/>
</dbReference>
<dbReference type="RefSeq" id="YP_855211.1">
    <property type="nucleotide sequence ID" value="NC_008570.1"/>
</dbReference>
<dbReference type="SMR" id="A0KG26"/>
<dbReference type="STRING" id="380703.AHA_0669"/>
<dbReference type="EnsemblBacteria" id="ABK38082">
    <property type="protein sequence ID" value="ABK38082"/>
    <property type="gene ID" value="AHA_0669"/>
</dbReference>
<dbReference type="GeneID" id="97859207"/>
<dbReference type="KEGG" id="aha:AHA_0669"/>
<dbReference type="PATRIC" id="fig|380703.7.peg.670"/>
<dbReference type="eggNOG" id="COG0335">
    <property type="taxonomic scope" value="Bacteria"/>
</dbReference>
<dbReference type="HOGENOM" id="CLU_103507_2_2_6"/>
<dbReference type="OrthoDB" id="9803541at2"/>
<dbReference type="PRO" id="PR:A0KG26"/>
<dbReference type="Proteomes" id="UP000000756">
    <property type="component" value="Chromosome"/>
</dbReference>
<dbReference type="GO" id="GO:0022625">
    <property type="term" value="C:cytosolic large ribosomal subunit"/>
    <property type="evidence" value="ECO:0007669"/>
    <property type="project" value="TreeGrafter"/>
</dbReference>
<dbReference type="GO" id="GO:0003735">
    <property type="term" value="F:structural constituent of ribosome"/>
    <property type="evidence" value="ECO:0007669"/>
    <property type="project" value="InterPro"/>
</dbReference>
<dbReference type="GO" id="GO:0006412">
    <property type="term" value="P:translation"/>
    <property type="evidence" value="ECO:0007669"/>
    <property type="project" value="UniProtKB-UniRule"/>
</dbReference>
<dbReference type="FunFam" id="2.30.30.790:FF:000001">
    <property type="entry name" value="50S ribosomal protein L19"/>
    <property type="match status" value="1"/>
</dbReference>
<dbReference type="Gene3D" id="2.30.30.790">
    <property type="match status" value="1"/>
</dbReference>
<dbReference type="HAMAP" id="MF_00402">
    <property type="entry name" value="Ribosomal_bL19"/>
    <property type="match status" value="1"/>
</dbReference>
<dbReference type="InterPro" id="IPR001857">
    <property type="entry name" value="Ribosomal_bL19"/>
</dbReference>
<dbReference type="InterPro" id="IPR018257">
    <property type="entry name" value="Ribosomal_bL19_CS"/>
</dbReference>
<dbReference type="InterPro" id="IPR038657">
    <property type="entry name" value="Ribosomal_bL19_sf"/>
</dbReference>
<dbReference type="InterPro" id="IPR008991">
    <property type="entry name" value="Translation_prot_SH3-like_sf"/>
</dbReference>
<dbReference type="NCBIfam" id="TIGR01024">
    <property type="entry name" value="rplS_bact"/>
    <property type="match status" value="1"/>
</dbReference>
<dbReference type="PANTHER" id="PTHR15680:SF9">
    <property type="entry name" value="LARGE RIBOSOMAL SUBUNIT PROTEIN BL19M"/>
    <property type="match status" value="1"/>
</dbReference>
<dbReference type="PANTHER" id="PTHR15680">
    <property type="entry name" value="RIBOSOMAL PROTEIN L19"/>
    <property type="match status" value="1"/>
</dbReference>
<dbReference type="Pfam" id="PF01245">
    <property type="entry name" value="Ribosomal_L19"/>
    <property type="match status" value="1"/>
</dbReference>
<dbReference type="PIRSF" id="PIRSF002191">
    <property type="entry name" value="Ribosomal_L19"/>
    <property type="match status" value="1"/>
</dbReference>
<dbReference type="PRINTS" id="PR00061">
    <property type="entry name" value="RIBOSOMALL19"/>
</dbReference>
<dbReference type="SUPFAM" id="SSF50104">
    <property type="entry name" value="Translation proteins SH3-like domain"/>
    <property type="match status" value="1"/>
</dbReference>
<dbReference type="PROSITE" id="PS01015">
    <property type="entry name" value="RIBOSOMAL_L19"/>
    <property type="match status" value="1"/>
</dbReference>